<organism>
    <name type="scientific">Chlamydia abortus (strain DSM 27085 / S26/3)</name>
    <name type="common">Chlamydophila abortus</name>
    <dbReference type="NCBI Taxonomy" id="218497"/>
    <lineage>
        <taxon>Bacteria</taxon>
        <taxon>Pseudomonadati</taxon>
        <taxon>Chlamydiota</taxon>
        <taxon>Chlamydiia</taxon>
        <taxon>Chlamydiales</taxon>
        <taxon>Chlamydiaceae</taxon>
        <taxon>Chlamydia/Chlamydophila group</taxon>
        <taxon>Chlamydia</taxon>
    </lineage>
</organism>
<comment type="function">
    <text evidence="1">Aspartyl-tRNA synthetase with relaxed tRNA specificity since it is able to aspartylate not only its cognate tRNA(Asp) but also tRNA(Asn). Reaction proceeds in two steps: L-aspartate is first activated by ATP to form Asp-AMP and then transferred to the acceptor end of tRNA(Asp/Asn).</text>
</comment>
<comment type="catalytic activity">
    <reaction evidence="1">
        <text>tRNA(Asx) + L-aspartate + ATP = L-aspartyl-tRNA(Asx) + AMP + diphosphate</text>
        <dbReference type="Rhea" id="RHEA:18349"/>
        <dbReference type="Rhea" id="RHEA-COMP:9710"/>
        <dbReference type="Rhea" id="RHEA-COMP:9711"/>
        <dbReference type="ChEBI" id="CHEBI:29991"/>
        <dbReference type="ChEBI" id="CHEBI:30616"/>
        <dbReference type="ChEBI" id="CHEBI:33019"/>
        <dbReference type="ChEBI" id="CHEBI:78442"/>
        <dbReference type="ChEBI" id="CHEBI:78516"/>
        <dbReference type="ChEBI" id="CHEBI:456215"/>
        <dbReference type="EC" id="6.1.1.23"/>
    </reaction>
</comment>
<comment type="subunit">
    <text evidence="1">Homodimer.</text>
</comment>
<comment type="subcellular location">
    <subcellularLocation>
        <location evidence="1">Cytoplasm</location>
    </subcellularLocation>
</comment>
<comment type="similarity">
    <text evidence="1">Belongs to the class-II aminoacyl-tRNA synthetase family. Type 1 subfamily.</text>
</comment>
<dbReference type="EC" id="6.1.1.23" evidence="1"/>
<dbReference type="EMBL" id="CR848038">
    <property type="protein sequence ID" value="CAH63536.1"/>
    <property type="molecule type" value="Genomic_DNA"/>
</dbReference>
<dbReference type="RefSeq" id="WP_011096818.1">
    <property type="nucleotide sequence ID" value="NC_004552.2"/>
</dbReference>
<dbReference type="SMR" id="Q5L734"/>
<dbReference type="KEGG" id="cab:CAB079"/>
<dbReference type="eggNOG" id="COG0173">
    <property type="taxonomic scope" value="Bacteria"/>
</dbReference>
<dbReference type="HOGENOM" id="CLU_014330_3_2_0"/>
<dbReference type="OrthoDB" id="9802326at2"/>
<dbReference type="Proteomes" id="UP000001012">
    <property type="component" value="Chromosome"/>
</dbReference>
<dbReference type="GO" id="GO:0005737">
    <property type="term" value="C:cytoplasm"/>
    <property type="evidence" value="ECO:0007669"/>
    <property type="project" value="UniProtKB-SubCell"/>
</dbReference>
<dbReference type="GO" id="GO:0004815">
    <property type="term" value="F:aspartate-tRNA ligase activity"/>
    <property type="evidence" value="ECO:0007669"/>
    <property type="project" value="UniProtKB-UniRule"/>
</dbReference>
<dbReference type="GO" id="GO:0050560">
    <property type="term" value="F:aspartate-tRNA(Asn) ligase activity"/>
    <property type="evidence" value="ECO:0007669"/>
    <property type="project" value="UniProtKB-EC"/>
</dbReference>
<dbReference type="GO" id="GO:0005524">
    <property type="term" value="F:ATP binding"/>
    <property type="evidence" value="ECO:0007669"/>
    <property type="project" value="UniProtKB-UniRule"/>
</dbReference>
<dbReference type="GO" id="GO:0003676">
    <property type="term" value="F:nucleic acid binding"/>
    <property type="evidence" value="ECO:0007669"/>
    <property type="project" value="InterPro"/>
</dbReference>
<dbReference type="GO" id="GO:0006422">
    <property type="term" value="P:aspartyl-tRNA aminoacylation"/>
    <property type="evidence" value="ECO:0007669"/>
    <property type="project" value="UniProtKB-UniRule"/>
</dbReference>
<dbReference type="CDD" id="cd00777">
    <property type="entry name" value="AspRS_core"/>
    <property type="match status" value="1"/>
</dbReference>
<dbReference type="CDD" id="cd04317">
    <property type="entry name" value="EcAspRS_like_N"/>
    <property type="match status" value="1"/>
</dbReference>
<dbReference type="Gene3D" id="3.30.930.10">
    <property type="entry name" value="Bira Bifunctional Protein, Domain 2"/>
    <property type="match status" value="1"/>
</dbReference>
<dbReference type="Gene3D" id="3.30.1360.30">
    <property type="entry name" value="GAD-like domain"/>
    <property type="match status" value="1"/>
</dbReference>
<dbReference type="Gene3D" id="2.40.50.140">
    <property type="entry name" value="Nucleic acid-binding proteins"/>
    <property type="match status" value="1"/>
</dbReference>
<dbReference type="HAMAP" id="MF_00044">
    <property type="entry name" value="Asp_tRNA_synth_type1"/>
    <property type="match status" value="1"/>
</dbReference>
<dbReference type="InterPro" id="IPR004364">
    <property type="entry name" value="Aa-tRNA-synt_II"/>
</dbReference>
<dbReference type="InterPro" id="IPR006195">
    <property type="entry name" value="aa-tRNA-synth_II"/>
</dbReference>
<dbReference type="InterPro" id="IPR045864">
    <property type="entry name" value="aa-tRNA-synth_II/BPL/LPL"/>
</dbReference>
<dbReference type="InterPro" id="IPR004524">
    <property type="entry name" value="Asp-tRNA-ligase_1"/>
</dbReference>
<dbReference type="InterPro" id="IPR047089">
    <property type="entry name" value="Asp-tRNA-ligase_1_N"/>
</dbReference>
<dbReference type="InterPro" id="IPR002312">
    <property type="entry name" value="Asp/Asn-tRNA-synth_IIb"/>
</dbReference>
<dbReference type="InterPro" id="IPR047090">
    <property type="entry name" value="AspRS_core"/>
</dbReference>
<dbReference type="InterPro" id="IPR004115">
    <property type="entry name" value="GAD-like_sf"/>
</dbReference>
<dbReference type="InterPro" id="IPR029351">
    <property type="entry name" value="GAD_dom"/>
</dbReference>
<dbReference type="InterPro" id="IPR012340">
    <property type="entry name" value="NA-bd_OB-fold"/>
</dbReference>
<dbReference type="InterPro" id="IPR004365">
    <property type="entry name" value="NA-bd_OB_tRNA"/>
</dbReference>
<dbReference type="NCBIfam" id="TIGR00459">
    <property type="entry name" value="aspS_bact"/>
    <property type="match status" value="1"/>
</dbReference>
<dbReference type="NCBIfam" id="NF001750">
    <property type="entry name" value="PRK00476.1"/>
    <property type="match status" value="1"/>
</dbReference>
<dbReference type="PANTHER" id="PTHR22594:SF5">
    <property type="entry name" value="ASPARTATE--TRNA LIGASE, MITOCHONDRIAL"/>
    <property type="match status" value="1"/>
</dbReference>
<dbReference type="PANTHER" id="PTHR22594">
    <property type="entry name" value="ASPARTYL/LYSYL-TRNA SYNTHETASE"/>
    <property type="match status" value="1"/>
</dbReference>
<dbReference type="Pfam" id="PF02938">
    <property type="entry name" value="GAD"/>
    <property type="match status" value="1"/>
</dbReference>
<dbReference type="Pfam" id="PF00152">
    <property type="entry name" value="tRNA-synt_2"/>
    <property type="match status" value="1"/>
</dbReference>
<dbReference type="Pfam" id="PF01336">
    <property type="entry name" value="tRNA_anti-codon"/>
    <property type="match status" value="1"/>
</dbReference>
<dbReference type="PRINTS" id="PR01042">
    <property type="entry name" value="TRNASYNTHASP"/>
</dbReference>
<dbReference type="SUPFAM" id="SSF55681">
    <property type="entry name" value="Class II aaRS and biotin synthetases"/>
    <property type="match status" value="1"/>
</dbReference>
<dbReference type="SUPFAM" id="SSF55261">
    <property type="entry name" value="GAD domain-like"/>
    <property type="match status" value="1"/>
</dbReference>
<dbReference type="SUPFAM" id="SSF50249">
    <property type="entry name" value="Nucleic acid-binding proteins"/>
    <property type="match status" value="1"/>
</dbReference>
<dbReference type="PROSITE" id="PS50862">
    <property type="entry name" value="AA_TRNA_LIGASE_II"/>
    <property type="match status" value="1"/>
</dbReference>
<feature type="chain" id="PRO_0000235518" description="Aspartate--tRNA(Asp/Asn) ligase">
    <location>
        <begin position="1"/>
        <end position="584"/>
    </location>
</feature>
<feature type="region of interest" description="Aspartate" evidence="1">
    <location>
        <begin position="201"/>
        <end position="204"/>
    </location>
</feature>
<feature type="binding site" evidence="1">
    <location>
        <position position="177"/>
    </location>
    <ligand>
        <name>L-aspartate</name>
        <dbReference type="ChEBI" id="CHEBI:29991"/>
    </ligand>
</feature>
<feature type="binding site" evidence="1">
    <location>
        <begin position="223"/>
        <end position="225"/>
    </location>
    <ligand>
        <name>ATP</name>
        <dbReference type="ChEBI" id="CHEBI:30616"/>
    </ligand>
</feature>
<feature type="binding site" evidence="1">
    <location>
        <position position="223"/>
    </location>
    <ligand>
        <name>L-aspartate</name>
        <dbReference type="ChEBI" id="CHEBI:29991"/>
    </ligand>
</feature>
<feature type="binding site" evidence="1">
    <location>
        <position position="232"/>
    </location>
    <ligand>
        <name>ATP</name>
        <dbReference type="ChEBI" id="CHEBI:30616"/>
    </ligand>
</feature>
<feature type="binding site" evidence="1">
    <location>
        <position position="447"/>
    </location>
    <ligand>
        <name>L-aspartate</name>
        <dbReference type="ChEBI" id="CHEBI:29991"/>
    </ligand>
</feature>
<feature type="binding site" evidence="1">
    <location>
        <position position="481"/>
    </location>
    <ligand>
        <name>ATP</name>
        <dbReference type="ChEBI" id="CHEBI:30616"/>
    </ligand>
</feature>
<feature type="binding site" evidence="1">
    <location>
        <position position="488"/>
    </location>
    <ligand>
        <name>L-aspartate</name>
        <dbReference type="ChEBI" id="CHEBI:29991"/>
    </ligand>
</feature>
<feature type="binding site" evidence="1">
    <location>
        <begin position="533"/>
        <end position="536"/>
    </location>
    <ligand>
        <name>ATP</name>
        <dbReference type="ChEBI" id="CHEBI:30616"/>
    </ligand>
</feature>
<feature type="site" description="Important for tRNA non-discrimination" evidence="1">
    <location>
        <position position="32"/>
    </location>
</feature>
<feature type="site" description="Important for tRNA non-discrimination" evidence="1">
    <location>
        <position position="84"/>
    </location>
</feature>
<gene>
    <name evidence="1" type="primary">aspS</name>
    <name type="ordered locus">CAB079</name>
</gene>
<keyword id="KW-0030">Aminoacyl-tRNA synthetase</keyword>
<keyword id="KW-0067">ATP-binding</keyword>
<keyword id="KW-0963">Cytoplasm</keyword>
<keyword id="KW-0436">Ligase</keyword>
<keyword id="KW-0547">Nucleotide-binding</keyword>
<keyword id="KW-0648">Protein biosynthesis</keyword>
<sequence length="584" mass="66482">MKYRTHRCNELSLSNVGERVRLSGWVHRYRNHGGVVFIDLRDRFGITQIVCREDEKPELHQLVDSVRSEWVLSIEGTVCRRLEGMENANLATGEIEVDIEKVDILSKAKNLPFSISDDHIHVNEELRLEYRYLDMRRGQILDRLVHRHKVMMACRQYMDKQGFTEVVTPILGKSTPEGARDYLVPSRIYPGSFYALPQSPQLFKQILMVGGLDRYFQIATCFRDEDLRADRQPEFAQIDIEMSFGTPNDLFPIIEQLVVEMFAVQGIKIDLPLPRMTYQEAKDLYGTDKPDLRFGLQLHDCREHAKEFSFSIFLDQLAQGGTIKGFCVPGGADMSRKQLDVYTEFVKRYGAMGLVWIKKQESGIASNVAKFASEAVFQAMFADFGAQNNDILLLIAAPEDVANQSLDHLRRLIAKERNFYNEAQYNFVWITDFPLFAKEDGKICSEHHPFTSPLDEDIPLLDKDPLSVRSSSYDLVLNGYEIASGSQRIHNADLQNKIFSILELSPESIKEKFDFFIDALSFGTPPHLGIALGLDRIMMVLTGAEGIREVIAFPKTQKAADLMMDAPAEIMTSQLKELSIKVTS</sequence>
<proteinExistence type="inferred from homology"/>
<protein>
    <recommendedName>
        <fullName evidence="1">Aspartate--tRNA(Asp/Asn) ligase</fullName>
        <ecNumber evidence="1">6.1.1.23</ecNumber>
    </recommendedName>
    <alternativeName>
        <fullName evidence="1">Aspartyl-tRNA synthetase</fullName>
        <shortName evidence="1">AspRS</shortName>
    </alternativeName>
    <alternativeName>
        <fullName evidence="1">Non-discriminating aspartyl-tRNA synthetase</fullName>
        <shortName evidence="1">ND-AspRS</shortName>
    </alternativeName>
</protein>
<accession>Q5L734</accession>
<evidence type="ECO:0000255" key="1">
    <source>
        <dbReference type="HAMAP-Rule" id="MF_00044"/>
    </source>
</evidence>
<name>SYDND_CHLAB</name>
<reference key="1">
    <citation type="journal article" date="2005" name="Genome Res.">
        <title>The Chlamydophila abortus genome sequence reveals an array of variable proteins that contribute to interspecies variation.</title>
        <authorList>
            <person name="Thomson N.R."/>
            <person name="Yeats C."/>
            <person name="Bell K."/>
            <person name="Holden M.T.G."/>
            <person name="Bentley S.D."/>
            <person name="Livingstone M."/>
            <person name="Cerdeno-Tarraga A.-M."/>
            <person name="Harris B."/>
            <person name="Doggett J."/>
            <person name="Ormond D."/>
            <person name="Mungall K."/>
            <person name="Clarke K."/>
            <person name="Feltwell T."/>
            <person name="Hance Z."/>
            <person name="Sanders M."/>
            <person name="Quail M.A."/>
            <person name="Price C."/>
            <person name="Barrell B.G."/>
            <person name="Parkhill J."/>
            <person name="Longbottom D."/>
        </authorList>
    </citation>
    <scope>NUCLEOTIDE SEQUENCE [LARGE SCALE GENOMIC DNA]</scope>
    <source>
        <strain>DSM 27085 / S26/3</strain>
    </source>
</reference>